<dbReference type="EC" id="1.14.11.-" evidence="1"/>
<dbReference type="EMBL" id="AE008922">
    <property type="protein sequence ID" value="AAM42045.1"/>
    <property type="molecule type" value="Genomic_DNA"/>
</dbReference>
<dbReference type="RefSeq" id="NP_638121.1">
    <property type="nucleotide sequence ID" value="NC_003902.1"/>
</dbReference>
<dbReference type="RefSeq" id="WP_011037901.1">
    <property type="nucleotide sequence ID" value="NC_003902.1"/>
</dbReference>
<dbReference type="SMR" id="Q8P741"/>
<dbReference type="STRING" id="190485.XCC2773"/>
<dbReference type="EnsemblBacteria" id="AAM42045">
    <property type="protein sequence ID" value="AAM42045"/>
    <property type="gene ID" value="XCC2773"/>
</dbReference>
<dbReference type="KEGG" id="xcc:XCC2773"/>
<dbReference type="PATRIC" id="fig|190485.4.peg.2960"/>
<dbReference type="eggNOG" id="COG3128">
    <property type="taxonomic scope" value="Bacteria"/>
</dbReference>
<dbReference type="HOGENOM" id="CLU_106663_0_0_6"/>
<dbReference type="OrthoDB" id="9812472at2"/>
<dbReference type="Proteomes" id="UP000001010">
    <property type="component" value="Chromosome"/>
</dbReference>
<dbReference type="GO" id="GO:0016706">
    <property type="term" value="F:2-oxoglutarate-dependent dioxygenase activity"/>
    <property type="evidence" value="ECO:0007669"/>
    <property type="project" value="UniProtKB-UniRule"/>
</dbReference>
<dbReference type="GO" id="GO:0005506">
    <property type="term" value="F:iron ion binding"/>
    <property type="evidence" value="ECO:0007669"/>
    <property type="project" value="UniProtKB-UniRule"/>
</dbReference>
<dbReference type="GO" id="GO:0031418">
    <property type="term" value="F:L-ascorbic acid binding"/>
    <property type="evidence" value="ECO:0007669"/>
    <property type="project" value="UniProtKB-KW"/>
</dbReference>
<dbReference type="GO" id="GO:0006974">
    <property type="term" value="P:DNA damage response"/>
    <property type="evidence" value="ECO:0000318"/>
    <property type="project" value="GO_Central"/>
</dbReference>
<dbReference type="GO" id="GO:0006879">
    <property type="term" value="P:intracellular iron ion homeostasis"/>
    <property type="evidence" value="ECO:0000318"/>
    <property type="project" value="GO_Central"/>
</dbReference>
<dbReference type="FunFam" id="2.60.120.620:FF:000006">
    <property type="entry name" value="PKHD-type hydroxylase YbiX"/>
    <property type="match status" value="1"/>
</dbReference>
<dbReference type="Gene3D" id="2.60.120.620">
    <property type="entry name" value="q2cbj1_9rhob like domain"/>
    <property type="match status" value="1"/>
</dbReference>
<dbReference type="Gene3D" id="4.10.860.20">
    <property type="entry name" value="Rabenosyn, Rab binding domain"/>
    <property type="match status" value="1"/>
</dbReference>
<dbReference type="HAMAP" id="MF_00657">
    <property type="entry name" value="Hydroxyl_YbiX"/>
    <property type="match status" value="1"/>
</dbReference>
<dbReference type="InterPro" id="IPR005123">
    <property type="entry name" value="Oxoglu/Fe-dep_dioxygenase_dom"/>
</dbReference>
<dbReference type="InterPro" id="IPR041097">
    <property type="entry name" value="PKHD_C"/>
</dbReference>
<dbReference type="InterPro" id="IPR023550">
    <property type="entry name" value="PKHD_hydroxylase"/>
</dbReference>
<dbReference type="InterPro" id="IPR006620">
    <property type="entry name" value="Pro_4_hyd_alph"/>
</dbReference>
<dbReference type="InterPro" id="IPR044862">
    <property type="entry name" value="Pro_4_hyd_alph_FE2OG_OXY"/>
</dbReference>
<dbReference type="NCBIfam" id="NF003973">
    <property type="entry name" value="PRK05467.1-2"/>
    <property type="match status" value="1"/>
</dbReference>
<dbReference type="NCBIfam" id="NF003974">
    <property type="entry name" value="PRK05467.1-3"/>
    <property type="match status" value="1"/>
</dbReference>
<dbReference type="NCBIfam" id="NF003975">
    <property type="entry name" value="PRK05467.1-4"/>
    <property type="match status" value="1"/>
</dbReference>
<dbReference type="PANTHER" id="PTHR41536">
    <property type="entry name" value="PKHD-TYPE HYDROXYLASE YBIX"/>
    <property type="match status" value="1"/>
</dbReference>
<dbReference type="PANTHER" id="PTHR41536:SF1">
    <property type="entry name" value="PKHD-TYPE HYDROXYLASE YBIX"/>
    <property type="match status" value="1"/>
</dbReference>
<dbReference type="Pfam" id="PF13640">
    <property type="entry name" value="2OG-FeII_Oxy_3"/>
    <property type="match status" value="1"/>
</dbReference>
<dbReference type="Pfam" id="PF18331">
    <property type="entry name" value="PKHD_C"/>
    <property type="match status" value="1"/>
</dbReference>
<dbReference type="SMART" id="SM00702">
    <property type="entry name" value="P4Hc"/>
    <property type="match status" value="1"/>
</dbReference>
<dbReference type="SUPFAM" id="SSF51197">
    <property type="entry name" value="Clavaminate synthase-like"/>
    <property type="match status" value="1"/>
</dbReference>
<dbReference type="PROSITE" id="PS51471">
    <property type="entry name" value="FE2OG_OXY"/>
    <property type="match status" value="1"/>
</dbReference>
<evidence type="ECO:0000255" key="1">
    <source>
        <dbReference type="HAMAP-Rule" id="MF_00657"/>
    </source>
</evidence>
<accession>Q8P741</accession>
<organism>
    <name type="scientific">Xanthomonas campestris pv. campestris (strain ATCC 33913 / DSM 3586 / NCPPB 528 / LMG 568 / P 25)</name>
    <dbReference type="NCBI Taxonomy" id="190485"/>
    <lineage>
        <taxon>Bacteria</taxon>
        <taxon>Pseudomonadati</taxon>
        <taxon>Pseudomonadota</taxon>
        <taxon>Gammaproteobacteria</taxon>
        <taxon>Lysobacterales</taxon>
        <taxon>Lysobacteraceae</taxon>
        <taxon>Xanthomonas</taxon>
    </lineage>
</organism>
<sequence>MLLPIPDVLTPAQLSQLSERLDAADWADGRITAGHQSAQAKDNAQLPEDSPIAREASALVLDALSRSSTFFSAALPRRIYPPLFNRYSGGQSFGYHVDNAVRYDRSRGGADPVRTDVSATLFLSDPDSYDGGELVIEDTYGTQSVKLPAGHLVIYPGTSLHKVMPVTRGTRVASFFWIQSMLRNDAQRRLLFELDVSIRRLTQDTPGHPSLIQLTGVYHNLLRQWADV</sequence>
<feature type="chain" id="PRO_0000206686" description="PKHD-type hydroxylase XCC2773">
    <location>
        <begin position="1"/>
        <end position="228"/>
    </location>
</feature>
<feature type="domain" description="Fe2OG dioxygenase" evidence="1">
    <location>
        <begin position="78"/>
        <end position="180"/>
    </location>
</feature>
<feature type="binding site" evidence="1">
    <location>
        <position position="96"/>
    </location>
    <ligand>
        <name>Fe cation</name>
        <dbReference type="ChEBI" id="CHEBI:24875"/>
    </ligand>
</feature>
<feature type="binding site" evidence="1">
    <location>
        <position position="98"/>
    </location>
    <ligand>
        <name>Fe cation</name>
        <dbReference type="ChEBI" id="CHEBI:24875"/>
    </ligand>
</feature>
<feature type="binding site" evidence="1">
    <location>
        <position position="161"/>
    </location>
    <ligand>
        <name>Fe cation</name>
        <dbReference type="ChEBI" id="CHEBI:24875"/>
    </ligand>
</feature>
<feature type="binding site" evidence="1">
    <location>
        <position position="171"/>
    </location>
    <ligand>
        <name>2-oxoglutarate</name>
        <dbReference type="ChEBI" id="CHEBI:16810"/>
    </ligand>
</feature>
<protein>
    <recommendedName>
        <fullName evidence="1">PKHD-type hydroxylase XCC2773</fullName>
        <ecNumber evidence="1">1.14.11.-</ecNumber>
    </recommendedName>
</protein>
<reference key="1">
    <citation type="journal article" date="2002" name="Nature">
        <title>Comparison of the genomes of two Xanthomonas pathogens with differing host specificities.</title>
        <authorList>
            <person name="da Silva A.C.R."/>
            <person name="Ferro J.A."/>
            <person name="Reinach F.C."/>
            <person name="Farah C.S."/>
            <person name="Furlan L.R."/>
            <person name="Quaggio R.B."/>
            <person name="Monteiro-Vitorello C.B."/>
            <person name="Van Sluys M.A."/>
            <person name="Almeida N.F. Jr."/>
            <person name="Alves L.M.C."/>
            <person name="do Amaral A.M."/>
            <person name="Bertolini M.C."/>
            <person name="Camargo L.E.A."/>
            <person name="Camarotte G."/>
            <person name="Cannavan F."/>
            <person name="Cardozo J."/>
            <person name="Chambergo F."/>
            <person name="Ciapina L.P."/>
            <person name="Cicarelli R.M.B."/>
            <person name="Coutinho L.L."/>
            <person name="Cursino-Santos J.R."/>
            <person name="El-Dorry H."/>
            <person name="Faria J.B."/>
            <person name="Ferreira A.J.S."/>
            <person name="Ferreira R.C.C."/>
            <person name="Ferro M.I.T."/>
            <person name="Formighieri E.F."/>
            <person name="Franco M.C."/>
            <person name="Greggio C.C."/>
            <person name="Gruber A."/>
            <person name="Katsuyama A.M."/>
            <person name="Kishi L.T."/>
            <person name="Leite R.P."/>
            <person name="Lemos E.G.M."/>
            <person name="Lemos M.V.F."/>
            <person name="Locali E.C."/>
            <person name="Machado M.A."/>
            <person name="Madeira A.M.B.N."/>
            <person name="Martinez-Rossi N.M."/>
            <person name="Martins E.C."/>
            <person name="Meidanis J."/>
            <person name="Menck C.F.M."/>
            <person name="Miyaki C.Y."/>
            <person name="Moon D.H."/>
            <person name="Moreira L.M."/>
            <person name="Novo M.T.M."/>
            <person name="Okura V.K."/>
            <person name="Oliveira M.C."/>
            <person name="Oliveira V.R."/>
            <person name="Pereira H.A."/>
            <person name="Rossi A."/>
            <person name="Sena J.A.D."/>
            <person name="Silva C."/>
            <person name="de Souza R.F."/>
            <person name="Spinola L.A.F."/>
            <person name="Takita M.A."/>
            <person name="Tamura R.E."/>
            <person name="Teixeira E.C."/>
            <person name="Tezza R.I.D."/>
            <person name="Trindade dos Santos M."/>
            <person name="Truffi D."/>
            <person name="Tsai S.M."/>
            <person name="White F.F."/>
            <person name="Setubal J.C."/>
            <person name="Kitajima J.P."/>
        </authorList>
    </citation>
    <scope>NUCLEOTIDE SEQUENCE [LARGE SCALE GENOMIC DNA]</scope>
    <source>
        <strain>ATCC 33913 / DSM 3586 / NCPPB 528 / LMG 568 / P 25</strain>
    </source>
</reference>
<name>Y2773_XANCP</name>
<proteinExistence type="inferred from homology"/>
<comment type="cofactor">
    <cofactor evidence="1">
        <name>Fe(2+)</name>
        <dbReference type="ChEBI" id="CHEBI:29033"/>
    </cofactor>
    <text evidence="1">Binds 1 Fe(2+) ion per subunit.</text>
</comment>
<comment type="cofactor">
    <cofactor evidence="1">
        <name>L-ascorbate</name>
        <dbReference type="ChEBI" id="CHEBI:38290"/>
    </cofactor>
</comment>
<gene>
    <name type="ordered locus">XCC2773</name>
</gene>
<keyword id="KW-0223">Dioxygenase</keyword>
<keyword id="KW-0408">Iron</keyword>
<keyword id="KW-0479">Metal-binding</keyword>
<keyword id="KW-0560">Oxidoreductase</keyword>
<keyword id="KW-1185">Reference proteome</keyword>
<keyword id="KW-0847">Vitamin C</keyword>